<reference key="1">
    <citation type="journal article" date="2006" name="Mol. Biol. Evol.">
        <title>The chloroplast genome sequence of Chara vulgaris sheds new light into the closest green algal relatives of land plants.</title>
        <authorList>
            <person name="Turmel M."/>
            <person name="Otis C."/>
            <person name="Lemieux C."/>
        </authorList>
    </citation>
    <scope>NUCLEOTIDE SEQUENCE [LARGE SCALE GENOMIC DNA]</scope>
</reference>
<proteinExistence type="inferred from homology"/>
<accession>Q1ACP1</accession>
<comment type="function">
    <text evidence="1">NDH shuttles electrons from NAD(P)H:plastoquinone, via FMN and iron-sulfur (Fe-S) centers, to quinones in the photosynthetic chain and possibly in a chloroplast respiratory chain. The immediate electron acceptor for the enzyme in this species is believed to be plastoquinone. Couples the redox reaction to proton translocation, and thus conserves the redox energy in a proton gradient.</text>
</comment>
<comment type="catalytic activity">
    <reaction evidence="1">
        <text>a plastoquinone + NADH + (n+1) H(+)(in) = a plastoquinol + NAD(+) + n H(+)(out)</text>
        <dbReference type="Rhea" id="RHEA:42608"/>
        <dbReference type="Rhea" id="RHEA-COMP:9561"/>
        <dbReference type="Rhea" id="RHEA-COMP:9562"/>
        <dbReference type="ChEBI" id="CHEBI:15378"/>
        <dbReference type="ChEBI" id="CHEBI:17757"/>
        <dbReference type="ChEBI" id="CHEBI:57540"/>
        <dbReference type="ChEBI" id="CHEBI:57945"/>
        <dbReference type="ChEBI" id="CHEBI:62192"/>
    </reaction>
</comment>
<comment type="catalytic activity">
    <reaction evidence="1">
        <text>a plastoquinone + NADPH + (n+1) H(+)(in) = a plastoquinol + NADP(+) + n H(+)(out)</text>
        <dbReference type="Rhea" id="RHEA:42612"/>
        <dbReference type="Rhea" id="RHEA-COMP:9561"/>
        <dbReference type="Rhea" id="RHEA-COMP:9562"/>
        <dbReference type="ChEBI" id="CHEBI:15378"/>
        <dbReference type="ChEBI" id="CHEBI:17757"/>
        <dbReference type="ChEBI" id="CHEBI:57783"/>
        <dbReference type="ChEBI" id="CHEBI:58349"/>
        <dbReference type="ChEBI" id="CHEBI:62192"/>
    </reaction>
</comment>
<comment type="subunit">
    <text evidence="1">NDH is composed of at least 16 different subunits, 5 of which are encoded in the nucleus.</text>
</comment>
<comment type="subcellular location">
    <subcellularLocation>
        <location evidence="1">Plastid</location>
        <location evidence="1">Chloroplast thylakoid membrane</location>
        <topology evidence="1">Multi-pass membrane protein</topology>
    </subcellularLocation>
</comment>
<comment type="similarity">
    <text evidence="1">Belongs to the complex I subunit 2 family.</text>
</comment>
<keyword id="KW-0150">Chloroplast</keyword>
<keyword id="KW-0472">Membrane</keyword>
<keyword id="KW-0520">NAD</keyword>
<keyword id="KW-0521">NADP</keyword>
<keyword id="KW-0934">Plastid</keyword>
<keyword id="KW-0618">Plastoquinone</keyword>
<keyword id="KW-0874">Quinone</keyword>
<keyword id="KW-0793">Thylakoid</keyword>
<keyword id="KW-1278">Translocase</keyword>
<keyword id="KW-0812">Transmembrane</keyword>
<keyword id="KW-1133">Transmembrane helix</keyword>
<keyword id="KW-0813">Transport</keyword>
<gene>
    <name evidence="1" type="primary">ndhB</name>
</gene>
<geneLocation type="chloroplast"/>
<sequence length="496" mass="55628">MYFQHQFSSLNLNSFLPEGILIFNIIFILILDLVSQKENKSMLVKISFIGLLLSMLTLIQQWYHESTIAFLGSFEVNHFTTCFRLIISLCCILCIPLSFEYIKCSGIRLTEFIIFLLFTTLGAMILSSANDLITIFISLECLGLGSYLLTGYVKKDIRSNEAGMKYLIIGGTSSSIFAYGLSWLYGLSGGSIYLKSIAYSFSHLNPSYSLASWFAYICIIVGIGFKLSLVPFHRWSPDVYEGSPTPVVAFLSIISKAGALALTIRISDIIFPILEQDSNSILQILAILSMIVGNLLAMVETSMKRILTYSSIAQAGYLLIGIVAGRNNGYASLLVYMIFYLFMNIGAFSCIILFGLRTGTDQIRDYTGLYTKDPWLASCLSLCLLSLAGIPPLTGFFGKILLFWSAWQSGFYFLVMTGIFTSIVSIYYYIRIVKFLVVAKEKDISYYVKKYSTYKSNSLMKQNPIELNIYLCTFISGFVGIFMNPVIYFAQQSILK</sequence>
<feature type="chain" id="PRO_0000275591" description="NAD(P)H-quinone oxidoreductase subunit 2, chloroplastic">
    <location>
        <begin position="1"/>
        <end position="496"/>
    </location>
</feature>
<feature type="transmembrane region" description="Helical" evidence="1">
    <location>
        <begin position="14"/>
        <end position="34"/>
    </location>
</feature>
<feature type="transmembrane region" description="Helical" evidence="1">
    <location>
        <begin position="42"/>
        <end position="62"/>
    </location>
</feature>
<feature type="transmembrane region" description="Helical" evidence="1">
    <location>
        <begin position="79"/>
        <end position="99"/>
    </location>
</feature>
<feature type="transmembrane region" description="Helical" evidence="1">
    <location>
        <begin position="109"/>
        <end position="129"/>
    </location>
</feature>
<feature type="transmembrane region" description="Helical" evidence="1">
    <location>
        <begin position="133"/>
        <end position="153"/>
    </location>
</feature>
<feature type="transmembrane region" description="Helical" evidence="1">
    <location>
        <begin position="167"/>
        <end position="187"/>
    </location>
</feature>
<feature type="transmembrane region" description="Helical" evidence="1">
    <location>
        <begin position="210"/>
        <end position="230"/>
    </location>
</feature>
<feature type="transmembrane region" description="Helical" evidence="1">
    <location>
        <begin position="244"/>
        <end position="264"/>
    </location>
</feature>
<feature type="transmembrane region" description="Helical" evidence="1">
    <location>
        <begin position="281"/>
        <end position="301"/>
    </location>
</feature>
<feature type="transmembrane region" description="Helical" evidence="1">
    <location>
        <begin position="305"/>
        <end position="325"/>
    </location>
</feature>
<feature type="transmembrane region" description="Helical" evidence="1">
    <location>
        <begin position="334"/>
        <end position="354"/>
    </location>
</feature>
<feature type="transmembrane region" description="Helical" evidence="1">
    <location>
        <begin position="377"/>
        <end position="397"/>
    </location>
</feature>
<feature type="transmembrane region" description="Helical" evidence="1">
    <location>
        <begin position="400"/>
        <end position="420"/>
    </location>
</feature>
<feature type="transmembrane region" description="Helical" evidence="1">
    <location>
        <begin position="469"/>
        <end position="489"/>
    </location>
</feature>
<name>NU2C_CHAVU</name>
<dbReference type="EC" id="7.1.1.-" evidence="1"/>
<dbReference type="EMBL" id="DQ229107">
    <property type="protein sequence ID" value="ABA61914.1"/>
    <property type="molecule type" value="Genomic_DNA"/>
</dbReference>
<dbReference type="RefSeq" id="YP_635706.1">
    <property type="nucleotide sequence ID" value="NC_008097.1"/>
</dbReference>
<dbReference type="SMR" id="Q1ACP1"/>
<dbReference type="GeneID" id="4100284"/>
<dbReference type="GO" id="GO:0009535">
    <property type="term" value="C:chloroplast thylakoid membrane"/>
    <property type="evidence" value="ECO:0007669"/>
    <property type="project" value="UniProtKB-SubCell"/>
</dbReference>
<dbReference type="GO" id="GO:0008137">
    <property type="term" value="F:NADH dehydrogenase (ubiquinone) activity"/>
    <property type="evidence" value="ECO:0007669"/>
    <property type="project" value="InterPro"/>
</dbReference>
<dbReference type="GO" id="GO:0048038">
    <property type="term" value="F:quinone binding"/>
    <property type="evidence" value="ECO:0007669"/>
    <property type="project" value="UniProtKB-KW"/>
</dbReference>
<dbReference type="GO" id="GO:0042773">
    <property type="term" value="P:ATP synthesis coupled electron transport"/>
    <property type="evidence" value="ECO:0007669"/>
    <property type="project" value="InterPro"/>
</dbReference>
<dbReference type="GO" id="GO:0019684">
    <property type="term" value="P:photosynthesis, light reaction"/>
    <property type="evidence" value="ECO:0007669"/>
    <property type="project" value="UniProtKB-UniRule"/>
</dbReference>
<dbReference type="HAMAP" id="MF_00445">
    <property type="entry name" value="NDH1_NuoN_1"/>
    <property type="match status" value="1"/>
</dbReference>
<dbReference type="InterPro" id="IPR010096">
    <property type="entry name" value="NADH-Q_OxRdtase_suN/2"/>
</dbReference>
<dbReference type="InterPro" id="IPR001750">
    <property type="entry name" value="ND/Mrp_TM"/>
</dbReference>
<dbReference type="InterPro" id="IPR045693">
    <property type="entry name" value="Ndh2_N"/>
</dbReference>
<dbReference type="NCBIfam" id="TIGR01770">
    <property type="entry name" value="NDH_I_N"/>
    <property type="match status" value="1"/>
</dbReference>
<dbReference type="NCBIfam" id="NF002701">
    <property type="entry name" value="PRK02504.1"/>
    <property type="match status" value="1"/>
</dbReference>
<dbReference type="PANTHER" id="PTHR22773">
    <property type="entry name" value="NADH DEHYDROGENASE"/>
    <property type="match status" value="1"/>
</dbReference>
<dbReference type="Pfam" id="PF19530">
    <property type="entry name" value="Ndh2_N"/>
    <property type="match status" value="1"/>
</dbReference>
<dbReference type="Pfam" id="PF00361">
    <property type="entry name" value="Proton_antipo_M"/>
    <property type="match status" value="1"/>
</dbReference>
<organism>
    <name type="scientific">Chara vulgaris</name>
    <name type="common">Common stonewort</name>
    <dbReference type="NCBI Taxonomy" id="55564"/>
    <lineage>
        <taxon>Eukaryota</taxon>
        <taxon>Viridiplantae</taxon>
        <taxon>Streptophyta</taxon>
        <taxon>Charophyceae</taxon>
        <taxon>Charales</taxon>
        <taxon>Characeae</taxon>
        <taxon>Chara</taxon>
    </lineage>
</organism>
<protein>
    <recommendedName>
        <fullName evidence="1">NAD(P)H-quinone oxidoreductase subunit 2, chloroplastic</fullName>
        <ecNumber evidence="1">7.1.1.-</ecNumber>
    </recommendedName>
    <alternativeName>
        <fullName evidence="1">NAD(P)H dehydrogenase, subunit 2</fullName>
    </alternativeName>
    <alternativeName>
        <fullName evidence="1">NADH-plastoquinone oxidoreductase subunit 2</fullName>
    </alternativeName>
</protein>
<evidence type="ECO:0000255" key="1">
    <source>
        <dbReference type="HAMAP-Rule" id="MF_00445"/>
    </source>
</evidence>